<proteinExistence type="inferred from homology"/>
<gene>
    <name evidence="1" type="primary">metK</name>
    <name type="ordered locus">LL1902</name>
    <name type="ORF">L153408</name>
</gene>
<evidence type="ECO:0000255" key="1">
    <source>
        <dbReference type="HAMAP-Rule" id="MF_00086"/>
    </source>
</evidence>
<feature type="chain" id="PRO_0000174535" description="S-adenosylmethionine synthase">
    <location>
        <begin position="1"/>
        <end position="399"/>
    </location>
</feature>
<feature type="region of interest" description="Flexible loop" evidence="1">
    <location>
        <begin position="100"/>
        <end position="110"/>
    </location>
</feature>
<feature type="binding site" description="in other chain" evidence="1">
    <location>
        <position position="16"/>
    </location>
    <ligand>
        <name>ATP</name>
        <dbReference type="ChEBI" id="CHEBI:30616"/>
        <note>ligand shared between two neighboring subunits</note>
    </ligand>
</feature>
<feature type="binding site" evidence="1">
    <location>
        <position position="18"/>
    </location>
    <ligand>
        <name>Mg(2+)</name>
        <dbReference type="ChEBI" id="CHEBI:18420"/>
    </ligand>
</feature>
<feature type="binding site" evidence="1">
    <location>
        <position position="44"/>
    </location>
    <ligand>
        <name>K(+)</name>
        <dbReference type="ChEBI" id="CHEBI:29103"/>
    </ligand>
</feature>
<feature type="binding site" description="in other chain" evidence="1">
    <location>
        <position position="57"/>
    </location>
    <ligand>
        <name>L-methionine</name>
        <dbReference type="ChEBI" id="CHEBI:57844"/>
        <note>ligand shared between two neighboring subunits</note>
    </ligand>
</feature>
<feature type="binding site" description="in other chain" evidence="1">
    <location>
        <position position="100"/>
    </location>
    <ligand>
        <name>L-methionine</name>
        <dbReference type="ChEBI" id="CHEBI:57844"/>
        <note>ligand shared between two neighboring subunits</note>
    </ligand>
</feature>
<feature type="binding site" description="in other chain" evidence="1">
    <location>
        <begin position="177"/>
        <end position="179"/>
    </location>
    <ligand>
        <name>ATP</name>
        <dbReference type="ChEBI" id="CHEBI:30616"/>
        <note>ligand shared between two neighboring subunits</note>
    </ligand>
</feature>
<feature type="binding site" description="in other chain" evidence="1">
    <location>
        <begin position="244"/>
        <end position="245"/>
    </location>
    <ligand>
        <name>ATP</name>
        <dbReference type="ChEBI" id="CHEBI:30616"/>
        <note>ligand shared between two neighboring subunits</note>
    </ligand>
</feature>
<feature type="binding site" evidence="1">
    <location>
        <position position="253"/>
    </location>
    <ligand>
        <name>ATP</name>
        <dbReference type="ChEBI" id="CHEBI:30616"/>
        <note>ligand shared between two neighboring subunits</note>
    </ligand>
</feature>
<feature type="binding site" evidence="1">
    <location>
        <position position="253"/>
    </location>
    <ligand>
        <name>L-methionine</name>
        <dbReference type="ChEBI" id="CHEBI:57844"/>
        <note>ligand shared between two neighboring subunits</note>
    </ligand>
</feature>
<feature type="binding site" description="in other chain" evidence="1">
    <location>
        <begin position="259"/>
        <end position="260"/>
    </location>
    <ligand>
        <name>ATP</name>
        <dbReference type="ChEBI" id="CHEBI:30616"/>
        <note>ligand shared between two neighboring subunits</note>
    </ligand>
</feature>
<feature type="binding site" evidence="1">
    <location>
        <position position="276"/>
    </location>
    <ligand>
        <name>ATP</name>
        <dbReference type="ChEBI" id="CHEBI:30616"/>
        <note>ligand shared between two neighboring subunits</note>
    </ligand>
</feature>
<feature type="binding site" evidence="1">
    <location>
        <position position="280"/>
    </location>
    <ligand>
        <name>ATP</name>
        <dbReference type="ChEBI" id="CHEBI:30616"/>
        <note>ligand shared between two neighboring subunits</note>
    </ligand>
</feature>
<feature type="binding site" description="in other chain" evidence="1">
    <location>
        <position position="284"/>
    </location>
    <ligand>
        <name>L-methionine</name>
        <dbReference type="ChEBI" id="CHEBI:57844"/>
        <note>ligand shared between two neighboring subunits</note>
    </ligand>
</feature>
<keyword id="KW-0067">ATP-binding</keyword>
<keyword id="KW-0963">Cytoplasm</keyword>
<keyword id="KW-0460">Magnesium</keyword>
<keyword id="KW-0479">Metal-binding</keyword>
<keyword id="KW-0547">Nucleotide-binding</keyword>
<keyword id="KW-0554">One-carbon metabolism</keyword>
<keyword id="KW-0630">Potassium</keyword>
<keyword id="KW-1185">Reference proteome</keyword>
<keyword id="KW-0808">Transferase</keyword>
<reference key="1">
    <citation type="journal article" date="2001" name="Genome Res.">
        <title>The complete genome sequence of the lactic acid bacterium Lactococcus lactis ssp. lactis IL1403.</title>
        <authorList>
            <person name="Bolotin A."/>
            <person name="Wincker P."/>
            <person name="Mauger S."/>
            <person name="Jaillon O."/>
            <person name="Malarme K."/>
            <person name="Weissenbach J."/>
            <person name="Ehrlich S.D."/>
            <person name="Sorokin A."/>
        </authorList>
    </citation>
    <scope>NUCLEOTIDE SEQUENCE [LARGE SCALE GENOMIC DNA]</scope>
    <source>
        <strain>IL1403</strain>
    </source>
</reference>
<accession>Q9CEE0</accession>
<sequence length="399" mass="43017">MSEKHLFTSESVSEGHPDKVADQISDAILDAILAQDPHAHVACETVVYTGTVNVFGEISTSAYVDIAHVVRETIKKIGYTDSENGFDYKSVGVHVSLVEQSSDIAQGVNEAEEVRDKNGQLVDPLDLIGAGDQGMMFGFATNETAEYMPLAISLSHKLVKKLADLRKSGEISYLRPDAKSQVTVEYDDNGKAKRIDTVVISTQHAASARNEEIHDDVINKVIKAVIPAELLDDETKYFINPTGRFVIGGPQGDSGLTGRKIIVDTYGGYAPHGGGAFSGKDATKVDRSASYAARYVAKNIVAAGLAEKAQIQLSYAIGVATPTSINVDTFGTGKVSDDELLAAIRKVFDLRPAGIIQMLDLLRPIYGQTAAYGHFGRTDVELPWEQTDKVEELKSVLGK</sequence>
<organism>
    <name type="scientific">Lactococcus lactis subsp. lactis (strain IL1403)</name>
    <name type="common">Streptococcus lactis</name>
    <dbReference type="NCBI Taxonomy" id="272623"/>
    <lineage>
        <taxon>Bacteria</taxon>
        <taxon>Bacillati</taxon>
        <taxon>Bacillota</taxon>
        <taxon>Bacilli</taxon>
        <taxon>Lactobacillales</taxon>
        <taxon>Streptococcaceae</taxon>
        <taxon>Lactococcus</taxon>
    </lineage>
</organism>
<name>METK_LACLA</name>
<protein>
    <recommendedName>
        <fullName evidence="1">S-adenosylmethionine synthase</fullName>
        <shortName evidence="1">AdoMet synthase</shortName>
        <ecNumber evidence="1">2.5.1.6</ecNumber>
    </recommendedName>
    <alternativeName>
        <fullName evidence="1">MAT</fullName>
    </alternativeName>
    <alternativeName>
        <fullName evidence="1">Methionine adenosyltransferase</fullName>
    </alternativeName>
</protein>
<comment type="function">
    <text evidence="1">Catalyzes the formation of S-adenosylmethionine (AdoMet) from methionine and ATP. The overall synthetic reaction is composed of two sequential steps, AdoMet formation and the subsequent tripolyphosphate hydrolysis which occurs prior to release of AdoMet from the enzyme.</text>
</comment>
<comment type="catalytic activity">
    <reaction evidence="1">
        <text>L-methionine + ATP + H2O = S-adenosyl-L-methionine + phosphate + diphosphate</text>
        <dbReference type="Rhea" id="RHEA:21080"/>
        <dbReference type="ChEBI" id="CHEBI:15377"/>
        <dbReference type="ChEBI" id="CHEBI:30616"/>
        <dbReference type="ChEBI" id="CHEBI:33019"/>
        <dbReference type="ChEBI" id="CHEBI:43474"/>
        <dbReference type="ChEBI" id="CHEBI:57844"/>
        <dbReference type="ChEBI" id="CHEBI:59789"/>
        <dbReference type="EC" id="2.5.1.6"/>
    </reaction>
</comment>
<comment type="cofactor">
    <cofactor evidence="1">
        <name>Mg(2+)</name>
        <dbReference type="ChEBI" id="CHEBI:18420"/>
    </cofactor>
    <text evidence="1">Binds 2 divalent ions per subunit.</text>
</comment>
<comment type="cofactor">
    <cofactor evidence="1">
        <name>K(+)</name>
        <dbReference type="ChEBI" id="CHEBI:29103"/>
    </cofactor>
    <text evidence="1">Binds 1 potassium ion per subunit.</text>
</comment>
<comment type="pathway">
    <text evidence="1">Amino-acid biosynthesis; S-adenosyl-L-methionine biosynthesis; S-adenosyl-L-methionine from L-methionine: step 1/1.</text>
</comment>
<comment type="subunit">
    <text evidence="1">Homotetramer; dimer of dimers.</text>
</comment>
<comment type="subcellular location">
    <subcellularLocation>
        <location evidence="1">Cytoplasm</location>
    </subcellularLocation>
</comment>
<comment type="similarity">
    <text evidence="1">Belongs to the AdoMet synthase family.</text>
</comment>
<dbReference type="EC" id="2.5.1.6" evidence="1"/>
<dbReference type="EMBL" id="AE005176">
    <property type="protein sequence ID" value="AAK06000.1"/>
    <property type="molecule type" value="Genomic_DNA"/>
</dbReference>
<dbReference type="PIR" id="F86862">
    <property type="entry name" value="F86862"/>
</dbReference>
<dbReference type="RefSeq" id="NP_268059.1">
    <property type="nucleotide sequence ID" value="NC_002662.1"/>
</dbReference>
<dbReference type="RefSeq" id="WP_010906191.1">
    <property type="nucleotide sequence ID" value="NC_002662.1"/>
</dbReference>
<dbReference type="SMR" id="Q9CEE0"/>
<dbReference type="PaxDb" id="272623-L153408"/>
<dbReference type="EnsemblBacteria" id="AAK06000">
    <property type="protein sequence ID" value="AAK06000"/>
    <property type="gene ID" value="L153408"/>
</dbReference>
<dbReference type="KEGG" id="lla:L153408"/>
<dbReference type="PATRIC" id="fig|272623.7.peg.2037"/>
<dbReference type="eggNOG" id="COG0192">
    <property type="taxonomic scope" value="Bacteria"/>
</dbReference>
<dbReference type="HOGENOM" id="CLU_041802_1_1_9"/>
<dbReference type="OrthoDB" id="9801686at2"/>
<dbReference type="UniPathway" id="UPA00315">
    <property type="reaction ID" value="UER00080"/>
</dbReference>
<dbReference type="Proteomes" id="UP000002196">
    <property type="component" value="Chromosome"/>
</dbReference>
<dbReference type="GO" id="GO:0005737">
    <property type="term" value="C:cytoplasm"/>
    <property type="evidence" value="ECO:0007669"/>
    <property type="project" value="UniProtKB-SubCell"/>
</dbReference>
<dbReference type="GO" id="GO:0005524">
    <property type="term" value="F:ATP binding"/>
    <property type="evidence" value="ECO:0007669"/>
    <property type="project" value="UniProtKB-UniRule"/>
</dbReference>
<dbReference type="GO" id="GO:0000287">
    <property type="term" value="F:magnesium ion binding"/>
    <property type="evidence" value="ECO:0007669"/>
    <property type="project" value="UniProtKB-UniRule"/>
</dbReference>
<dbReference type="GO" id="GO:0004478">
    <property type="term" value="F:methionine adenosyltransferase activity"/>
    <property type="evidence" value="ECO:0007669"/>
    <property type="project" value="UniProtKB-UniRule"/>
</dbReference>
<dbReference type="GO" id="GO:0006730">
    <property type="term" value="P:one-carbon metabolic process"/>
    <property type="evidence" value="ECO:0007669"/>
    <property type="project" value="UniProtKB-KW"/>
</dbReference>
<dbReference type="GO" id="GO:0006556">
    <property type="term" value="P:S-adenosylmethionine biosynthetic process"/>
    <property type="evidence" value="ECO:0007669"/>
    <property type="project" value="UniProtKB-UniRule"/>
</dbReference>
<dbReference type="CDD" id="cd18079">
    <property type="entry name" value="S-AdoMet_synt"/>
    <property type="match status" value="1"/>
</dbReference>
<dbReference type="FunFam" id="3.30.300.10:FF:000003">
    <property type="entry name" value="S-adenosylmethionine synthase"/>
    <property type="match status" value="1"/>
</dbReference>
<dbReference type="Gene3D" id="3.30.300.10">
    <property type="match status" value="3"/>
</dbReference>
<dbReference type="HAMAP" id="MF_00086">
    <property type="entry name" value="S_AdoMet_synth1"/>
    <property type="match status" value="1"/>
</dbReference>
<dbReference type="InterPro" id="IPR022631">
    <property type="entry name" value="ADOMET_SYNTHASE_CS"/>
</dbReference>
<dbReference type="InterPro" id="IPR022630">
    <property type="entry name" value="S-AdoMet_synt_C"/>
</dbReference>
<dbReference type="InterPro" id="IPR022629">
    <property type="entry name" value="S-AdoMet_synt_central"/>
</dbReference>
<dbReference type="InterPro" id="IPR022628">
    <property type="entry name" value="S-AdoMet_synt_N"/>
</dbReference>
<dbReference type="InterPro" id="IPR002133">
    <property type="entry name" value="S-AdoMet_synthetase"/>
</dbReference>
<dbReference type="InterPro" id="IPR022636">
    <property type="entry name" value="S-AdoMet_synthetase_sfam"/>
</dbReference>
<dbReference type="NCBIfam" id="TIGR01034">
    <property type="entry name" value="metK"/>
    <property type="match status" value="1"/>
</dbReference>
<dbReference type="PANTHER" id="PTHR11964">
    <property type="entry name" value="S-ADENOSYLMETHIONINE SYNTHETASE"/>
    <property type="match status" value="1"/>
</dbReference>
<dbReference type="Pfam" id="PF02773">
    <property type="entry name" value="S-AdoMet_synt_C"/>
    <property type="match status" value="1"/>
</dbReference>
<dbReference type="Pfam" id="PF02772">
    <property type="entry name" value="S-AdoMet_synt_M"/>
    <property type="match status" value="1"/>
</dbReference>
<dbReference type="Pfam" id="PF00438">
    <property type="entry name" value="S-AdoMet_synt_N"/>
    <property type="match status" value="1"/>
</dbReference>
<dbReference type="PIRSF" id="PIRSF000497">
    <property type="entry name" value="MAT"/>
    <property type="match status" value="1"/>
</dbReference>
<dbReference type="SUPFAM" id="SSF55973">
    <property type="entry name" value="S-adenosylmethionine synthetase"/>
    <property type="match status" value="3"/>
</dbReference>
<dbReference type="PROSITE" id="PS00376">
    <property type="entry name" value="ADOMET_SYNTHASE_1"/>
    <property type="match status" value="1"/>
</dbReference>
<dbReference type="PROSITE" id="PS00377">
    <property type="entry name" value="ADOMET_SYNTHASE_2"/>
    <property type="match status" value="1"/>
</dbReference>